<dbReference type="EMBL" id="BC147973">
    <property type="protein sequence ID" value="AAI47974.1"/>
    <property type="molecule type" value="mRNA"/>
</dbReference>
<dbReference type="RefSeq" id="NP_001096580.1">
    <property type="nucleotide sequence ID" value="NM_001103110.1"/>
</dbReference>
<dbReference type="RefSeq" id="XP_024842711.1">
    <property type="nucleotide sequence ID" value="XM_024986943.2"/>
</dbReference>
<dbReference type="SMR" id="A6QLI1"/>
<dbReference type="FunCoup" id="A6QLI1">
    <property type="interactions" value="589"/>
</dbReference>
<dbReference type="STRING" id="9913.ENSBTAP00000007935"/>
<dbReference type="GlyCosmos" id="A6QLI1">
    <property type="glycosylation" value="3 sites, No reported glycans"/>
</dbReference>
<dbReference type="GlyGen" id="A6QLI1">
    <property type="glycosylation" value="3 sites"/>
</dbReference>
<dbReference type="PaxDb" id="9913-ENSBTAP00000007935"/>
<dbReference type="Ensembl" id="ENSBTAT00000007935.6">
    <property type="protein sequence ID" value="ENSBTAP00000007935.5"/>
    <property type="gene ID" value="ENSBTAG00000038347.3"/>
</dbReference>
<dbReference type="GeneID" id="100125225"/>
<dbReference type="KEGG" id="bta:100125225"/>
<dbReference type="CTD" id="57084"/>
<dbReference type="VEuPathDB" id="HostDB:ENSBTAG00000038347"/>
<dbReference type="VGNC" id="VGNC:34701">
    <property type="gene designation" value="SLC17A6"/>
</dbReference>
<dbReference type="eggNOG" id="KOG2532">
    <property type="taxonomic scope" value="Eukaryota"/>
</dbReference>
<dbReference type="GeneTree" id="ENSGT00940000155891"/>
<dbReference type="HOGENOM" id="CLU_001265_5_0_1"/>
<dbReference type="InParanoid" id="A6QLI1"/>
<dbReference type="OMA" id="YNEQSQM"/>
<dbReference type="OrthoDB" id="2985014at2759"/>
<dbReference type="TreeFam" id="TF313535"/>
<dbReference type="Reactome" id="R-BTA-428643">
    <property type="pathway name" value="Organic anion transporters"/>
</dbReference>
<dbReference type="Proteomes" id="UP000009136">
    <property type="component" value="Chromosome 29"/>
</dbReference>
<dbReference type="Bgee" id="ENSBTAG00000038347">
    <property type="expression patterns" value="Expressed in midbrain and 19 other cell types or tissues"/>
</dbReference>
<dbReference type="GO" id="GO:0034707">
    <property type="term" value="C:chloride channel complex"/>
    <property type="evidence" value="ECO:0007669"/>
    <property type="project" value="UniProtKB-KW"/>
</dbReference>
<dbReference type="GO" id="GO:0060076">
    <property type="term" value="C:excitatory synapse"/>
    <property type="evidence" value="ECO:0000318"/>
    <property type="project" value="GO_Central"/>
</dbReference>
<dbReference type="GO" id="GO:0043005">
    <property type="term" value="C:neuron projection"/>
    <property type="evidence" value="ECO:0000250"/>
    <property type="project" value="UniProtKB"/>
</dbReference>
<dbReference type="GO" id="GO:0005886">
    <property type="term" value="C:plasma membrane"/>
    <property type="evidence" value="ECO:0007669"/>
    <property type="project" value="UniProtKB-SubCell"/>
</dbReference>
<dbReference type="GO" id="GO:0008021">
    <property type="term" value="C:synaptic vesicle"/>
    <property type="evidence" value="ECO:0000250"/>
    <property type="project" value="UniProtKB"/>
</dbReference>
<dbReference type="GO" id="GO:0030672">
    <property type="term" value="C:synaptic vesicle membrane"/>
    <property type="evidence" value="ECO:0000250"/>
    <property type="project" value="UniProtKB"/>
</dbReference>
<dbReference type="GO" id="GO:0005254">
    <property type="term" value="F:chloride channel activity"/>
    <property type="evidence" value="ECO:0000250"/>
    <property type="project" value="UniProtKB"/>
</dbReference>
<dbReference type="GO" id="GO:0005313">
    <property type="term" value="F:L-glutamate transmembrane transporter activity"/>
    <property type="evidence" value="ECO:0000318"/>
    <property type="project" value="GO_Central"/>
</dbReference>
<dbReference type="GO" id="GO:0140788">
    <property type="term" value="F:L-glutamate uniporter activity"/>
    <property type="evidence" value="ECO:0000250"/>
    <property type="project" value="UniProtKB"/>
</dbReference>
<dbReference type="GO" id="GO:0005326">
    <property type="term" value="F:neurotransmitter transmembrane transporter activity"/>
    <property type="evidence" value="ECO:0000318"/>
    <property type="project" value="GO_Central"/>
</dbReference>
<dbReference type="GO" id="GO:0015386">
    <property type="term" value="F:potassium:proton antiporter activity"/>
    <property type="evidence" value="ECO:0000250"/>
    <property type="project" value="UniProtKB"/>
</dbReference>
<dbReference type="GO" id="GO:0005436">
    <property type="term" value="F:sodium:phosphate symporter activity"/>
    <property type="evidence" value="ECO:0000250"/>
    <property type="project" value="UniProtKB"/>
</dbReference>
<dbReference type="GO" id="GO:1990384">
    <property type="term" value="P:hyaloid vascular plexus regression"/>
    <property type="evidence" value="ECO:0000250"/>
    <property type="project" value="UniProtKB"/>
</dbReference>
<dbReference type="GO" id="GO:0051938">
    <property type="term" value="P:L-glutamate import"/>
    <property type="evidence" value="ECO:0000250"/>
    <property type="project" value="UniProtKB"/>
</dbReference>
<dbReference type="GO" id="GO:0015813">
    <property type="term" value="P:L-glutamate transmembrane transport"/>
    <property type="evidence" value="ECO:0000250"/>
    <property type="project" value="UniProtKB"/>
</dbReference>
<dbReference type="GO" id="GO:0098700">
    <property type="term" value="P:neurotransmitter loading into synaptic vesicle"/>
    <property type="evidence" value="ECO:0000318"/>
    <property type="project" value="GO_Central"/>
</dbReference>
<dbReference type="GO" id="GO:0055062">
    <property type="term" value="P:phosphate ion homeostasis"/>
    <property type="evidence" value="ECO:0000250"/>
    <property type="project" value="UniProtKB"/>
</dbReference>
<dbReference type="GO" id="GO:0006817">
    <property type="term" value="P:phosphate ion transport"/>
    <property type="evidence" value="ECO:0000250"/>
    <property type="project" value="UniProtKB"/>
</dbReference>
<dbReference type="GO" id="GO:0050803">
    <property type="term" value="P:regulation of synapse structure or activity"/>
    <property type="evidence" value="ECO:0000318"/>
    <property type="project" value="GO_Central"/>
</dbReference>
<dbReference type="GO" id="GO:0044341">
    <property type="term" value="P:sodium-dependent phosphate transport"/>
    <property type="evidence" value="ECO:0000250"/>
    <property type="project" value="UniProtKB"/>
</dbReference>
<dbReference type="GO" id="GO:0035249">
    <property type="term" value="P:synaptic transmission, glutamatergic"/>
    <property type="evidence" value="ECO:0000318"/>
    <property type="project" value="GO_Central"/>
</dbReference>
<dbReference type="CDD" id="cd17382">
    <property type="entry name" value="MFS_SLC17A6_7_8_VGluT"/>
    <property type="match status" value="1"/>
</dbReference>
<dbReference type="FunFam" id="1.20.1250.20:FF:000004">
    <property type="entry name" value="vesicular glutamate transporter 2 isoform X1"/>
    <property type="match status" value="1"/>
</dbReference>
<dbReference type="FunFam" id="1.20.1250.20:FF:000005">
    <property type="entry name" value="vesicular glutamate transporter 2 isoform X1"/>
    <property type="match status" value="1"/>
</dbReference>
<dbReference type="Gene3D" id="1.20.1250.20">
    <property type="entry name" value="MFS general substrate transporter like domains"/>
    <property type="match status" value="2"/>
</dbReference>
<dbReference type="InterPro" id="IPR011701">
    <property type="entry name" value="MFS"/>
</dbReference>
<dbReference type="InterPro" id="IPR020846">
    <property type="entry name" value="MFS_dom"/>
</dbReference>
<dbReference type="InterPro" id="IPR050382">
    <property type="entry name" value="MFS_Na/Anion_cotransporter"/>
</dbReference>
<dbReference type="InterPro" id="IPR036259">
    <property type="entry name" value="MFS_trans_sf"/>
</dbReference>
<dbReference type="PANTHER" id="PTHR11662">
    <property type="entry name" value="SOLUTE CARRIER FAMILY 17"/>
    <property type="match status" value="1"/>
</dbReference>
<dbReference type="PANTHER" id="PTHR11662:SF201">
    <property type="entry name" value="VESICULAR GLUTAMATE TRANSPORTER 2"/>
    <property type="match status" value="1"/>
</dbReference>
<dbReference type="Pfam" id="PF07690">
    <property type="entry name" value="MFS_1"/>
    <property type="match status" value="1"/>
</dbReference>
<dbReference type="SUPFAM" id="SSF103473">
    <property type="entry name" value="MFS general substrate transporter"/>
    <property type="match status" value="1"/>
</dbReference>
<dbReference type="PROSITE" id="PS50850">
    <property type="entry name" value="MFS"/>
    <property type="match status" value="1"/>
</dbReference>
<gene>
    <name evidence="3" type="primary">SLC17A6</name>
    <name type="synonym">VGLUT2</name>
</gene>
<name>VGLU2_BOVIN</name>
<sequence>MESVKQRILTPGKEGLKNFAGKSLGQIYRVLEKKQDAGETIELTEDGKPLEVPEKKAPLCDCTCFGLPRRYIIAIMSGLGFCISFGIRCNLGVAIVDMVNNSTIHRGGKVIKEKAKFNWDPETVGMIHGSFFWGYIITQIPGGYIASRLAANRVFGAAILLTSTLNMLIPSAARVHYGCVIFVRILQGLVEGVTYPACHGIWSKWAPPLERSRLATTSFCGSYAGAVIAMPLAGILVQYTGWSSVFYVYGSFGMIWYMFWLLVSYESPAKHPTITDEERRYIEESIGESANLLGAMEKFKTPWRKFFTSMPVYAIIVANFCRSWTFYLLLISQPAYFEEVFGFEISKVGMLSAVPHLVMTIIVPIGGQIADFLRSKQILSTTTVRKIMNCGGFGMEATLLLVVGYSHTRGVAISFLVLAVGFSGFAISGFNVNHLDIAPRYASILMGISNGVGTLSGMVCPIIVGAMTKNKSREEWQYVFLIAALVHYGGVIFYAIFASGEKQPWADPEETSEEKCGFIHEDELDEETGDITQNYINYGTTKSYGATTQANGGWPNGWEKKEEFVQEEVQNSYNYKDRDDYS</sequence>
<evidence type="ECO:0000250" key="1">
    <source>
        <dbReference type="UniProtKB" id="Q8BLE7"/>
    </source>
</evidence>
<evidence type="ECO:0000250" key="2">
    <source>
        <dbReference type="UniProtKB" id="Q9JI12"/>
    </source>
</evidence>
<evidence type="ECO:0000250" key="3">
    <source>
        <dbReference type="UniProtKB" id="Q9P2U8"/>
    </source>
</evidence>
<evidence type="ECO:0000255" key="4"/>
<evidence type="ECO:0000305" key="5"/>
<proteinExistence type="evidence at transcript level"/>
<feature type="chain" id="PRO_0000318168" description="Vesicular glutamate transporter 2">
    <location>
        <begin position="1"/>
        <end position="582"/>
    </location>
</feature>
<feature type="topological domain" description="Cytoplasmic" evidence="4">
    <location>
        <begin position="1"/>
        <end position="71"/>
    </location>
</feature>
<feature type="transmembrane region" description="Helical" evidence="4">
    <location>
        <begin position="72"/>
        <end position="92"/>
    </location>
</feature>
<feature type="topological domain" description="Vesicular" evidence="4">
    <location>
        <begin position="93"/>
        <end position="125"/>
    </location>
</feature>
<feature type="transmembrane region" description="Helical" evidence="4">
    <location>
        <begin position="126"/>
        <end position="146"/>
    </location>
</feature>
<feature type="topological domain" description="Cytoplasmic" evidence="4">
    <location>
        <begin position="147"/>
        <end position="148"/>
    </location>
</feature>
<feature type="transmembrane region" description="Helical" evidence="4">
    <location>
        <begin position="149"/>
        <end position="169"/>
    </location>
</feature>
<feature type="topological domain" description="Vesicular" evidence="4">
    <location>
        <begin position="170"/>
        <end position="177"/>
    </location>
</feature>
<feature type="transmembrane region" description="Helical" evidence="4">
    <location>
        <begin position="178"/>
        <end position="198"/>
    </location>
</feature>
<feature type="topological domain" description="Cytoplasmic" evidence="4">
    <location>
        <begin position="199"/>
        <end position="216"/>
    </location>
</feature>
<feature type="transmembrane region" description="Helical" evidence="4">
    <location>
        <begin position="217"/>
        <end position="237"/>
    </location>
</feature>
<feature type="topological domain" description="Vesicular" evidence="4">
    <location>
        <begin position="238"/>
        <end position="244"/>
    </location>
</feature>
<feature type="transmembrane region" description="Helical" evidence="4">
    <location>
        <begin position="245"/>
        <end position="265"/>
    </location>
</feature>
<feature type="topological domain" description="Cytoplasmic" evidence="4">
    <location>
        <begin position="266"/>
        <end position="310"/>
    </location>
</feature>
<feature type="transmembrane region" description="Helical" evidence="4">
    <location>
        <begin position="311"/>
        <end position="331"/>
    </location>
</feature>
<feature type="topological domain" description="Vesicular" evidence="4">
    <location>
        <begin position="332"/>
        <end position="349"/>
    </location>
</feature>
<feature type="transmembrane region" description="Helical" evidence="4">
    <location>
        <begin position="350"/>
        <end position="370"/>
    </location>
</feature>
<feature type="topological domain" description="Cytoplasmic" evidence="4">
    <location>
        <begin position="371"/>
        <end position="386"/>
    </location>
</feature>
<feature type="transmembrane region" description="Helical" evidence="4">
    <location>
        <begin position="387"/>
        <end position="407"/>
    </location>
</feature>
<feature type="topological domain" description="Vesicular" evidence="4">
    <location>
        <begin position="408"/>
        <end position="409"/>
    </location>
</feature>
<feature type="transmembrane region" description="Helical" evidence="4">
    <location>
        <begin position="410"/>
        <end position="430"/>
    </location>
</feature>
<feature type="topological domain" description="Cytoplasmic" evidence="4">
    <location>
        <begin position="431"/>
        <end position="443"/>
    </location>
</feature>
<feature type="transmembrane region" description="Helical" evidence="4">
    <location>
        <begin position="444"/>
        <end position="464"/>
    </location>
</feature>
<feature type="topological domain" description="Vesicular" evidence="4">
    <location>
        <begin position="465"/>
        <end position="477"/>
    </location>
</feature>
<feature type="transmembrane region" description="Helical" evidence="4">
    <location>
        <begin position="478"/>
        <end position="498"/>
    </location>
</feature>
<feature type="topological domain" description="Cytoplasmic" evidence="4">
    <location>
        <begin position="499"/>
        <end position="582"/>
    </location>
</feature>
<feature type="glycosylation site" description="N-linked (GlcNAc...) asparagine" evidence="4">
    <location>
        <position position="100"/>
    </location>
</feature>
<feature type="glycosylation site" description="N-linked (GlcNAc...) asparagine" evidence="4">
    <location>
        <position position="101"/>
    </location>
</feature>
<feature type="glycosylation site" description="N-linked (GlcNAc...) asparagine" evidence="4">
    <location>
        <position position="470"/>
    </location>
</feature>
<organism>
    <name type="scientific">Bos taurus</name>
    <name type="common">Bovine</name>
    <dbReference type="NCBI Taxonomy" id="9913"/>
    <lineage>
        <taxon>Eukaryota</taxon>
        <taxon>Metazoa</taxon>
        <taxon>Chordata</taxon>
        <taxon>Craniata</taxon>
        <taxon>Vertebrata</taxon>
        <taxon>Euteleostomi</taxon>
        <taxon>Mammalia</taxon>
        <taxon>Eutheria</taxon>
        <taxon>Laurasiatheria</taxon>
        <taxon>Artiodactyla</taxon>
        <taxon>Ruminantia</taxon>
        <taxon>Pecora</taxon>
        <taxon>Bovidae</taxon>
        <taxon>Bovinae</taxon>
        <taxon>Bos</taxon>
    </lineage>
</organism>
<accession>A6QLI1</accession>
<protein>
    <recommendedName>
        <fullName evidence="3">Vesicular glutamate transporter 2</fullName>
        <shortName evidence="3">VGluT2</shortName>
    </recommendedName>
    <alternativeName>
        <fullName>Solute carrier family 17 member 6</fullName>
    </alternativeName>
</protein>
<reference key="1">
    <citation type="submission" date="2007-06" db="EMBL/GenBank/DDBJ databases">
        <authorList>
            <consortium name="NIH - Mammalian Gene Collection (MGC) project"/>
        </authorList>
    </citation>
    <scope>NUCLEOTIDE SEQUENCE [LARGE SCALE MRNA]</scope>
    <source>
        <strain>Hereford</strain>
        <tissue>Thalamus</tissue>
    </source>
</reference>
<comment type="function">
    <text evidence="1 2">Multifunctional transporter that transports L-glutamate as well as multiple ions such as chloride, proton, potassium, sodium and phosphate. At the synaptic vesicle membrane, mainly functions as a uniporter which transports preferentially L-glutamate but also, phosphate from the cytoplasm into synaptic vesicles at presynaptic nerve terminals of excitatory neural cells. The L-glutamate or phosphate uniporter activity is electrogenic and is driven by the proton electrochemical gradient, mainly by the electrical gradient established by the vacuolar H(+)-ATPase across the synaptic vesicle membrane. In addition, functions as a chloride channel that allows a chloride permeation through the synaptic vesicle membrane therefore affects the proton electrochemical gradient and promotes synaptic vesicles acidification. Moreover, functions as a vesicular K(+)/H(+) antiport allowing to maintain the electrical gradient and to decrease chemical gradient and therefore sustain vesicular L-glutamate uptake. The vesicular H(+)/H(+) antiport activity is electroneutral. At the plasma membrane, following exocytosis, functions as a symporter of Na(+) and phosphate from the extracellular space to the cytoplasm allowing synaptic phosphate homeostasis regulation. The symporter activity is driven by an inside negative membrane potential and is electrogenic (By similarity). Also involved in the regulation of retinal hyaloid vessel regression during postnatal development (By similarity). May also play a role in the endocrine L-glutamatergic system of other tissues such as pineal gland and pancreas (By similarity).</text>
</comment>
<comment type="catalytic activity">
    <reaction evidence="2">
        <text>L-glutamate(out) = L-glutamate(in)</text>
        <dbReference type="Rhea" id="RHEA:66336"/>
        <dbReference type="ChEBI" id="CHEBI:29985"/>
    </reaction>
</comment>
<comment type="catalytic activity">
    <reaction evidence="2">
        <text>3 Na(+)(out) + phosphate(out) = 3 Na(+)(in) + phosphate(in)</text>
        <dbReference type="Rhea" id="RHEA:71255"/>
        <dbReference type="ChEBI" id="CHEBI:29101"/>
        <dbReference type="ChEBI" id="CHEBI:43474"/>
    </reaction>
</comment>
<comment type="catalytic activity">
    <reaction evidence="2">
        <text>phosphate(in) = phosphate(out)</text>
        <dbReference type="Rhea" id="RHEA:32823"/>
        <dbReference type="ChEBI" id="CHEBI:43474"/>
    </reaction>
</comment>
<comment type="catalytic activity">
    <reaction evidence="2">
        <text>K(+)(in) + H(+)(out) = K(+)(out) + H(+)(in)</text>
        <dbReference type="Rhea" id="RHEA:29467"/>
        <dbReference type="ChEBI" id="CHEBI:15378"/>
        <dbReference type="ChEBI" id="CHEBI:29103"/>
    </reaction>
</comment>
<comment type="catalytic activity">
    <reaction evidence="2">
        <text>chloride(in) = chloride(out)</text>
        <dbReference type="Rhea" id="RHEA:29823"/>
        <dbReference type="ChEBI" id="CHEBI:17996"/>
    </reaction>
</comment>
<comment type="activity regulation">
    <text evidence="2">Chloride channel activity is allosterically activated by lumenal H(+) and Cl(-) leading to synaptic vesicles acidification. The L-glutamate transport activity is allosterically activated by lumenal H(+) and Cl(-). The allosteric requirement for H(+) efficiently prevents non-vesicular efflux across the plasma membrane. The L-glutamate uniporter activity exhibits a biphasic dependence on chloride concentration.</text>
</comment>
<comment type="subcellular location">
    <subcellularLocation>
        <location evidence="1">Cytoplasmic vesicle</location>
        <location evidence="1">Secretory vesicle</location>
        <location evidence="1">Synaptic vesicle membrane</location>
        <topology evidence="4">Multi-pass membrane protein</topology>
    </subcellularLocation>
    <subcellularLocation>
        <location evidence="1">Synapse</location>
        <location evidence="1">Synaptosome</location>
    </subcellularLocation>
    <subcellularLocation>
        <location evidence="1">Cell membrane</location>
        <topology evidence="4">Multi-pass membrane protein</topology>
    </subcellularLocation>
</comment>
<comment type="similarity">
    <text evidence="5">Belongs to the major facilitator superfamily. Sodium/anion cotransporter family. VGLUT subfamily.</text>
</comment>
<keyword id="KW-0050">Antiport</keyword>
<keyword id="KW-1003">Cell membrane</keyword>
<keyword id="KW-0868">Chloride</keyword>
<keyword id="KW-0869">Chloride channel</keyword>
<keyword id="KW-0968">Cytoplasmic vesicle</keyword>
<keyword id="KW-0325">Glycoprotein</keyword>
<keyword id="KW-0407">Ion channel</keyword>
<keyword id="KW-0406">Ion transport</keyword>
<keyword id="KW-0472">Membrane</keyword>
<keyword id="KW-0532">Neurotransmitter transport</keyword>
<keyword id="KW-0592">Phosphate transport</keyword>
<keyword id="KW-1185">Reference proteome</keyword>
<keyword id="KW-0915">Sodium</keyword>
<keyword id="KW-0739">Sodium transport</keyword>
<keyword id="KW-0769">Symport</keyword>
<keyword id="KW-0770">Synapse</keyword>
<keyword id="KW-0771">Synaptosome</keyword>
<keyword id="KW-0812">Transmembrane</keyword>
<keyword id="KW-1133">Transmembrane helix</keyword>
<keyword id="KW-0813">Transport</keyword>